<accession>Q9UTA2</accession>
<evidence type="ECO:0000250" key="1"/>
<evidence type="ECO:0000255" key="2"/>
<evidence type="ECO:0000269" key="3">
    <source>
    </source>
</evidence>
<evidence type="ECO:0000305" key="4"/>
<comment type="function">
    <text evidence="1">Putative mitochondrial redox protein which could be involved in the reduction of small toxic molecules.</text>
</comment>
<comment type="subcellular location">
    <subcellularLocation>
        <location evidence="3">Mitochondrion</location>
    </subcellularLocation>
</comment>
<comment type="similarity">
    <text evidence="4">Belongs to the FMP46 family.</text>
</comment>
<proteinExistence type="inferred from homology"/>
<sequence length="121" mass="13907">MFGLTTKRILTLFTKKRQTLVEQKLTEYMIAGEKTDNQMLHFKLQVETATPTLDQLNIMLSNIGKDKSDLLVAGATSIEDALTKYQHDNQLFRRPCLVDWDKGKVSPYSILLQTRDFSKLL</sequence>
<organism>
    <name type="scientific">Schizosaccharomyces pombe (strain 972 / ATCC 24843)</name>
    <name type="common">Fission yeast</name>
    <dbReference type="NCBI Taxonomy" id="284812"/>
    <lineage>
        <taxon>Eukaryota</taxon>
        <taxon>Fungi</taxon>
        <taxon>Dikarya</taxon>
        <taxon>Ascomycota</taxon>
        <taxon>Taphrinomycotina</taxon>
        <taxon>Schizosaccharomycetes</taxon>
        <taxon>Schizosaccharomycetales</taxon>
        <taxon>Schizosaccharomycetaceae</taxon>
        <taxon>Schizosaccharomyces</taxon>
    </lineage>
</organism>
<reference key="1">
    <citation type="journal article" date="2002" name="Nature">
        <title>The genome sequence of Schizosaccharomyces pombe.</title>
        <authorList>
            <person name="Wood V."/>
            <person name="Gwilliam R."/>
            <person name="Rajandream M.A."/>
            <person name="Lyne M.H."/>
            <person name="Lyne R."/>
            <person name="Stewart A."/>
            <person name="Sgouros J.G."/>
            <person name="Peat N."/>
            <person name="Hayles J."/>
            <person name="Baker S.G."/>
            <person name="Basham D."/>
            <person name="Bowman S."/>
            <person name="Brooks K."/>
            <person name="Brown D."/>
            <person name="Brown S."/>
            <person name="Chillingworth T."/>
            <person name="Churcher C.M."/>
            <person name="Collins M."/>
            <person name="Connor R."/>
            <person name="Cronin A."/>
            <person name="Davis P."/>
            <person name="Feltwell T."/>
            <person name="Fraser A."/>
            <person name="Gentles S."/>
            <person name="Goble A."/>
            <person name="Hamlin N."/>
            <person name="Harris D.E."/>
            <person name="Hidalgo J."/>
            <person name="Hodgson G."/>
            <person name="Holroyd S."/>
            <person name="Hornsby T."/>
            <person name="Howarth S."/>
            <person name="Huckle E.J."/>
            <person name="Hunt S."/>
            <person name="Jagels K."/>
            <person name="James K.D."/>
            <person name="Jones L."/>
            <person name="Jones M."/>
            <person name="Leather S."/>
            <person name="McDonald S."/>
            <person name="McLean J."/>
            <person name="Mooney P."/>
            <person name="Moule S."/>
            <person name="Mungall K.L."/>
            <person name="Murphy L.D."/>
            <person name="Niblett D."/>
            <person name="Odell C."/>
            <person name="Oliver K."/>
            <person name="O'Neil S."/>
            <person name="Pearson D."/>
            <person name="Quail M.A."/>
            <person name="Rabbinowitsch E."/>
            <person name="Rutherford K.M."/>
            <person name="Rutter S."/>
            <person name="Saunders D."/>
            <person name="Seeger K."/>
            <person name="Sharp S."/>
            <person name="Skelton J."/>
            <person name="Simmonds M.N."/>
            <person name="Squares R."/>
            <person name="Squares S."/>
            <person name="Stevens K."/>
            <person name="Taylor K."/>
            <person name="Taylor R.G."/>
            <person name="Tivey A."/>
            <person name="Walsh S.V."/>
            <person name="Warren T."/>
            <person name="Whitehead S."/>
            <person name="Woodward J.R."/>
            <person name="Volckaert G."/>
            <person name="Aert R."/>
            <person name="Robben J."/>
            <person name="Grymonprez B."/>
            <person name="Weltjens I."/>
            <person name="Vanstreels E."/>
            <person name="Rieger M."/>
            <person name="Schaefer M."/>
            <person name="Mueller-Auer S."/>
            <person name="Gabel C."/>
            <person name="Fuchs M."/>
            <person name="Duesterhoeft A."/>
            <person name="Fritzc C."/>
            <person name="Holzer E."/>
            <person name="Moestl D."/>
            <person name="Hilbert H."/>
            <person name="Borzym K."/>
            <person name="Langer I."/>
            <person name="Beck A."/>
            <person name="Lehrach H."/>
            <person name="Reinhardt R."/>
            <person name="Pohl T.M."/>
            <person name="Eger P."/>
            <person name="Zimmermann W."/>
            <person name="Wedler H."/>
            <person name="Wambutt R."/>
            <person name="Purnelle B."/>
            <person name="Goffeau A."/>
            <person name="Cadieu E."/>
            <person name="Dreano S."/>
            <person name="Gloux S."/>
            <person name="Lelaure V."/>
            <person name="Mottier S."/>
            <person name="Galibert F."/>
            <person name="Aves S.J."/>
            <person name="Xiang Z."/>
            <person name="Hunt C."/>
            <person name="Moore K."/>
            <person name="Hurst S.M."/>
            <person name="Lucas M."/>
            <person name="Rochet M."/>
            <person name="Gaillardin C."/>
            <person name="Tallada V.A."/>
            <person name="Garzon A."/>
            <person name="Thode G."/>
            <person name="Daga R.R."/>
            <person name="Cruzado L."/>
            <person name="Jimenez J."/>
            <person name="Sanchez M."/>
            <person name="del Rey F."/>
            <person name="Benito J."/>
            <person name="Dominguez A."/>
            <person name="Revuelta J.L."/>
            <person name="Moreno S."/>
            <person name="Armstrong J."/>
            <person name="Forsburg S.L."/>
            <person name="Cerutti L."/>
            <person name="Lowe T."/>
            <person name="McCombie W.R."/>
            <person name="Paulsen I."/>
            <person name="Potashkin J."/>
            <person name="Shpakovski G.V."/>
            <person name="Ussery D."/>
            <person name="Barrell B.G."/>
            <person name="Nurse P."/>
        </authorList>
    </citation>
    <scope>NUCLEOTIDE SEQUENCE [LARGE SCALE GENOMIC DNA]</scope>
    <source>
        <strain>972 / ATCC 24843</strain>
    </source>
</reference>
<reference key="2">
    <citation type="journal article" date="2006" name="Nat. Biotechnol.">
        <title>ORFeome cloning and global analysis of protein localization in the fission yeast Schizosaccharomyces pombe.</title>
        <authorList>
            <person name="Matsuyama A."/>
            <person name="Arai R."/>
            <person name="Yashiroda Y."/>
            <person name="Shirai A."/>
            <person name="Kamata A."/>
            <person name="Sekido S."/>
            <person name="Kobayashi Y."/>
            <person name="Hashimoto A."/>
            <person name="Hamamoto M."/>
            <person name="Hiraoka Y."/>
            <person name="Horinouchi S."/>
            <person name="Yoshida M."/>
        </authorList>
    </citation>
    <scope>SUBCELLULAR LOCATION [LARGE SCALE ANALYSIS]</scope>
</reference>
<feature type="transit peptide" description="Mitochondrion" evidence="2">
    <location>
        <begin position="1"/>
        <end position="17"/>
    </location>
</feature>
<feature type="chain" id="PRO_0000374044" description="Putative redox protein fmp46, mitochondrial">
    <location>
        <begin position="18"/>
        <end position="121"/>
    </location>
</feature>
<feature type="active site" evidence="1">
    <location>
        <position position="96"/>
    </location>
</feature>
<dbReference type="EC" id="1.-.-.-"/>
<dbReference type="EMBL" id="CU329670">
    <property type="protein sequence ID" value="CAB61784.1"/>
    <property type="molecule type" value="Genomic_DNA"/>
</dbReference>
<dbReference type="PIR" id="T50205">
    <property type="entry name" value="T50205"/>
</dbReference>
<dbReference type="RefSeq" id="NP_594478.1">
    <property type="nucleotide sequence ID" value="NM_001019907.2"/>
</dbReference>
<dbReference type="SMR" id="Q9UTA2"/>
<dbReference type="BioGRID" id="279185">
    <property type="interactions" value="3"/>
</dbReference>
<dbReference type="PaxDb" id="4896-SPAC25B8.18.1"/>
<dbReference type="EnsemblFungi" id="SPAC25B8.18.1">
    <property type="protein sequence ID" value="SPAC25B8.18.1:pep"/>
    <property type="gene ID" value="SPAC25B8.18"/>
</dbReference>
<dbReference type="KEGG" id="spo:2542735"/>
<dbReference type="PomBase" id="SPAC25B8.18"/>
<dbReference type="VEuPathDB" id="FungiDB:SPAC25B8.18"/>
<dbReference type="HOGENOM" id="CLU_2039413_0_0_1"/>
<dbReference type="InParanoid" id="Q9UTA2"/>
<dbReference type="OMA" id="RPCLVDW"/>
<dbReference type="PhylomeDB" id="Q9UTA2"/>
<dbReference type="PRO" id="PR:Q9UTA2"/>
<dbReference type="Proteomes" id="UP000002485">
    <property type="component" value="Chromosome I"/>
</dbReference>
<dbReference type="GO" id="GO:0005739">
    <property type="term" value="C:mitochondrion"/>
    <property type="evidence" value="ECO:0007005"/>
    <property type="project" value="PomBase"/>
</dbReference>
<dbReference type="GO" id="GO:0016491">
    <property type="term" value="F:oxidoreductase activity"/>
    <property type="evidence" value="ECO:0007669"/>
    <property type="project" value="UniProtKB-KW"/>
</dbReference>
<dbReference type="Gene3D" id="3.40.30.10">
    <property type="entry name" value="Glutaredoxin"/>
    <property type="match status" value="1"/>
</dbReference>
<dbReference type="InterPro" id="IPR012882">
    <property type="entry name" value="Fmp46"/>
</dbReference>
<dbReference type="InterPro" id="IPR036249">
    <property type="entry name" value="Thioredoxin-like_sf"/>
</dbReference>
<dbReference type="PANTHER" id="PTHR28071">
    <property type="entry name" value="REDOX PROTEIN FMP46, MITOCHONDRIAL-RELATED"/>
    <property type="match status" value="1"/>
</dbReference>
<dbReference type="PANTHER" id="PTHR28071:SF1">
    <property type="entry name" value="REDOX PROTEIN FMP46, MITOCHONDRIAL-RELATED"/>
    <property type="match status" value="1"/>
</dbReference>
<dbReference type="Pfam" id="PF07955">
    <property type="entry name" value="DUF1687"/>
    <property type="match status" value="1"/>
</dbReference>
<dbReference type="SUPFAM" id="SSF52833">
    <property type="entry name" value="Thioredoxin-like"/>
    <property type="match status" value="1"/>
</dbReference>
<gene>
    <name type="primary">fmp46</name>
    <name type="ORF">SPAC25B8.18</name>
</gene>
<protein>
    <recommendedName>
        <fullName>Putative redox protein fmp46, mitochondrial</fullName>
        <ecNumber>1.-.-.-</ecNumber>
    </recommendedName>
</protein>
<keyword id="KW-0496">Mitochondrion</keyword>
<keyword id="KW-0560">Oxidoreductase</keyword>
<keyword id="KW-1185">Reference proteome</keyword>
<keyword id="KW-0809">Transit peptide</keyword>
<name>FMP46_SCHPO</name>